<organism>
    <name type="scientific">Mycoplasmoides gallisepticum (strain R(low / passage 15 / clone 2))</name>
    <name type="common">Mycoplasma gallisepticum</name>
    <dbReference type="NCBI Taxonomy" id="710127"/>
    <lineage>
        <taxon>Bacteria</taxon>
        <taxon>Bacillati</taxon>
        <taxon>Mycoplasmatota</taxon>
        <taxon>Mycoplasmoidales</taxon>
        <taxon>Mycoplasmoidaceae</taxon>
        <taxon>Mycoplasmoides</taxon>
    </lineage>
</organism>
<dbReference type="EMBL" id="AF036708">
    <property type="protein sequence ID" value="AAB95403.1"/>
    <property type="molecule type" value="Genomic_DNA"/>
</dbReference>
<dbReference type="EMBL" id="AE015450">
    <property type="protein sequence ID" value="AAP56417.1"/>
    <property type="molecule type" value="Genomic_DNA"/>
</dbReference>
<dbReference type="RefSeq" id="WP_011113296.1">
    <property type="nucleotide sequence ID" value="NC_004829.2"/>
</dbReference>
<dbReference type="SMR" id="O52348"/>
<dbReference type="GeneID" id="93509885"/>
<dbReference type="KEGG" id="mga:MGA_0735"/>
<dbReference type="HOGENOM" id="CLU_098841_0_1_14"/>
<dbReference type="OrthoDB" id="9810939at2"/>
<dbReference type="Proteomes" id="UP000001418">
    <property type="component" value="Chromosome"/>
</dbReference>
<dbReference type="GO" id="GO:0022625">
    <property type="term" value="C:cytosolic large ribosomal subunit"/>
    <property type="evidence" value="ECO:0007669"/>
    <property type="project" value="TreeGrafter"/>
</dbReference>
<dbReference type="GO" id="GO:0008097">
    <property type="term" value="F:5S rRNA binding"/>
    <property type="evidence" value="ECO:0007669"/>
    <property type="project" value="TreeGrafter"/>
</dbReference>
<dbReference type="GO" id="GO:0003735">
    <property type="term" value="F:structural constituent of ribosome"/>
    <property type="evidence" value="ECO:0007669"/>
    <property type="project" value="InterPro"/>
</dbReference>
<dbReference type="GO" id="GO:0006412">
    <property type="term" value="P:translation"/>
    <property type="evidence" value="ECO:0007669"/>
    <property type="project" value="UniProtKB-UniRule"/>
</dbReference>
<dbReference type="CDD" id="cd00432">
    <property type="entry name" value="Ribosomal_L18_L5e"/>
    <property type="match status" value="1"/>
</dbReference>
<dbReference type="Gene3D" id="3.30.420.100">
    <property type="match status" value="1"/>
</dbReference>
<dbReference type="HAMAP" id="MF_01337_B">
    <property type="entry name" value="Ribosomal_uL18_B"/>
    <property type="match status" value="1"/>
</dbReference>
<dbReference type="InterPro" id="IPR004389">
    <property type="entry name" value="Ribosomal_uL18_bac-type"/>
</dbReference>
<dbReference type="InterPro" id="IPR005484">
    <property type="entry name" value="Ribosomal_uL18_bac/euk"/>
</dbReference>
<dbReference type="NCBIfam" id="TIGR00060">
    <property type="entry name" value="L18_bact"/>
    <property type="match status" value="1"/>
</dbReference>
<dbReference type="PANTHER" id="PTHR12899">
    <property type="entry name" value="39S RIBOSOMAL PROTEIN L18, MITOCHONDRIAL"/>
    <property type="match status" value="1"/>
</dbReference>
<dbReference type="PANTHER" id="PTHR12899:SF3">
    <property type="entry name" value="LARGE RIBOSOMAL SUBUNIT PROTEIN UL18M"/>
    <property type="match status" value="1"/>
</dbReference>
<dbReference type="Pfam" id="PF00861">
    <property type="entry name" value="Ribosomal_L18p"/>
    <property type="match status" value="1"/>
</dbReference>
<dbReference type="SUPFAM" id="SSF53137">
    <property type="entry name" value="Translational machinery components"/>
    <property type="match status" value="1"/>
</dbReference>
<proteinExistence type="inferred from homology"/>
<evidence type="ECO:0000255" key="1">
    <source>
        <dbReference type="HAMAP-Rule" id="MF_01337"/>
    </source>
</evidence>
<evidence type="ECO:0000305" key="2"/>
<name>RL18_MYCGA</name>
<sequence>MKQVNMNRNERRQMRHKRVIKKIRRIDNDRPVMIVVKSNSHISAQVWDFNQNKIIASSSSVSLDLVNGNKENAAVVGTDIANKLLKMKIDEITFDHGGSKYHGRIAALADAARKAGLKF</sequence>
<reference key="1">
    <citation type="journal article" date="2000" name="Mol. Biol. (Mosk.)">
        <title>Determination and analysis of the nucleotide sequence of a segment of a Mycoplasma gallisepticum strain A5969 chromosome, containing operons S10 and rrn23-5.</title>
        <authorList>
            <person name="Skamrov A.V."/>
            <person name="Gol'dman M.A."/>
            <person name="Feoktistova E.S."/>
            <person name="Bibilashvili R.S."/>
        </authorList>
    </citation>
    <scope>NUCLEOTIDE SEQUENCE [GENOMIC DNA]</scope>
    <source>
        <strain>A5969Var.B</strain>
    </source>
</reference>
<reference key="2">
    <citation type="journal article" date="2003" name="Microbiology">
        <title>The complete genome sequence of the avian pathogen Mycoplasma gallisepticum strain R(low).</title>
        <authorList>
            <person name="Papazisi L."/>
            <person name="Gorton T.S."/>
            <person name="Kutish G."/>
            <person name="Markham P.F."/>
            <person name="Browning G.F."/>
            <person name="Nguyen D.K."/>
            <person name="Swartzell S."/>
            <person name="Madan A."/>
            <person name="Mahairas G."/>
            <person name="Geary S.J."/>
        </authorList>
    </citation>
    <scope>NUCLEOTIDE SEQUENCE [LARGE SCALE GENOMIC DNA]</scope>
    <source>
        <strain>R(low / passage 15 / clone 2)</strain>
    </source>
</reference>
<accession>O52348</accession>
<comment type="function">
    <text evidence="1">This is one of the proteins that bind and probably mediate the attachment of the 5S RNA into the large ribosomal subunit, where it forms part of the central protuberance.</text>
</comment>
<comment type="subunit">
    <text evidence="1">Part of the 50S ribosomal subunit; part of the 5S rRNA/L5/L18/L25 subcomplex. Contacts the 5S and 23S rRNAs.</text>
</comment>
<comment type="similarity">
    <text evidence="1">Belongs to the universal ribosomal protein uL18 family.</text>
</comment>
<keyword id="KW-1185">Reference proteome</keyword>
<keyword id="KW-0687">Ribonucleoprotein</keyword>
<keyword id="KW-0689">Ribosomal protein</keyword>
<keyword id="KW-0694">RNA-binding</keyword>
<keyword id="KW-0699">rRNA-binding</keyword>
<feature type="chain" id="PRO_0000131296" description="Large ribosomal subunit protein uL18">
    <location>
        <begin position="1"/>
        <end position="119"/>
    </location>
</feature>
<feature type="sequence conflict" description="In Ref. 1; AAB95403." evidence="2" ref="1">
    <original>V</original>
    <variation>I</variation>
    <location>
        <position position="75"/>
    </location>
</feature>
<gene>
    <name evidence="1" type="primary">rplR</name>
    <name evidence="1" type="synonym">rpl18</name>
    <name type="ordered locus">MYCGA0670</name>
    <name type="ORF">MGA_0735</name>
</gene>
<protein>
    <recommendedName>
        <fullName evidence="1">Large ribosomal subunit protein uL18</fullName>
    </recommendedName>
    <alternativeName>
        <fullName evidence="2">50S ribosomal protein L18</fullName>
    </alternativeName>
</protein>